<sequence>MFTAKNPFEDIVLKATSDELTSENWELNLEVCDKVSSGGDTAARNCIAAIQKRLVHRNANVQLYALTLADAVAKNCGLAAHQEIASRSFTQTLARICLDRNTHSTVKKRCSALVKEWAGEFDDQSLGLMKETYESLKSQDAVAEDETPAEPPREPTSEQLRAEDEELRRALELSIQDQGGRNAWPSYNTEQAETSGSSAPAAASSSSSAYQPTSQSLAPAQQQQQQQHDANHTNGTSSSAHAQPLSAATPPAVASRVRALYDFSPTEPGELAFSRGEVIRVLDSVYEHWWRGEVRGEAGIFPVNYVEVLPDPTPDELQREAQMEARIFSQAADIDRLLSKLRSLDPARDNLADDDELQELYQKSLAMRPKIVKLIDRYSNKITELKAMNDKFVHARGSFDEMMEQSLSRYNPGGHSSQDYLRPRPELQQHFSASSADYAQHPSYPTAHAYSVQQAQSASSAHDQIQYPFNPEQRHGYAQSAGAEPADPSYVQGSRLPSGPQPPQQITMAHQQQPHEQQYSSAPHDDEKRRLFERARAESEAFQQQHFQSQAHTSRSGYSGAYPSQPDASVLNQQMGNMNIGGSSSYASHPTGH</sequence>
<proteinExistence type="inferred from homology"/>
<evidence type="ECO:0000250" key="1"/>
<evidence type="ECO:0000255" key="2">
    <source>
        <dbReference type="PROSITE-ProRule" id="PRU00192"/>
    </source>
</evidence>
<evidence type="ECO:0000255" key="3">
    <source>
        <dbReference type="PROSITE-ProRule" id="PRU00218"/>
    </source>
</evidence>
<evidence type="ECO:0000256" key="4">
    <source>
        <dbReference type="SAM" id="MobiDB-lite"/>
    </source>
</evidence>
<evidence type="ECO:0000305" key="5"/>
<comment type="function">
    <text evidence="1">Component of the ESCRT-0 complex which is the sorting receptor for ubiquitinated cargo proteins at the multivesicular body (MVB).</text>
</comment>
<comment type="subunit">
    <text evidence="1">Component of the ESCRT-0 complex composed of HSE1 and VPS27.</text>
</comment>
<comment type="subcellular location">
    <subcellularLocation>
        <location evidence="1">Endosome membrane</location>
        <topology evidence="1">Peripheral membrane protein</topology>
        <orientation evidence="1">Cytoplasmic side</orientation>
    </subcellularLocation>
</comment>
<comment type="similarity">
    <text evidence="5">Belongs to the STAM family.</text>
</comment>
<dbReference type="EMBL" id="CM003152">
    <property type="protein sequence ID" value="KIS67520.1"/>
    <property type="molecule type" value="Genomic_DNA"/>
</dbReference>
<dbReference type="RefSeq" id="XP_011390913.1">
    <property type="nucleotide sequence ID" value="XM_011392611.1"/>
</dbReference>
<dbReference type="SMR" id="Q4P5J4"/>
<dbReference type="FunCoup" id="Q4P5J4">
    <property type="interactions" value="176"/>
</dbReference>
<dbReference type="STRING" id="237631.Q4P5J4"/>
<dbReference type="EnsemblFungi" id="KIS67520">
    <property type="protein sequence ID" value="KIS67520"/>
    <property type="gene ID" value="UMAG_04619"/>
</dbReference>
<dbReference type="GeneID" id="23564745"/>
<dbReference type="KEGG" id="uma:UMAG_04619"/>
<dbReference type="VEuPathDB" id="FungiDB:UMAG_04619"/>
<dbReference type="eggNOG" id="KOG2199">
    <property type="taxonomic scope" value="Eukaryota"/>
</dbReference>
<dbReference type="HOGENOM" id="CLU_010104_1_1_1"/>
<dbReference type="InParanoid" id="Q4P5J4"/>
<dbReference type="OMA" id="QVYRDWW"/>
<dbReference type="OrthoDB" id="10255964at2759"/>
<dbReference type="Proteomes" id="UP000000561">
    <property type="component" value="Chromosome 13"/>
</dbReference>
<dbReference type="GO" id="GO:0010008">
    <property type="term" value="C:endosome membrane"/>
    <property type="evidence" value="ECO:0007669"/>
    <property type="project" value="UniProtKB-SubCell"/>
</dbReference>
<dbReference type="GO" id="GO:0033565">
    <property type="term" value="C:ESCRT-0 complex"/>
    <property type="evidence" value="ECO:0000318"/>
    <property type="project" value="GO_Central"/>
</dbReference>
<dbReference type="GO" id="GO:0035091">
    <property type="term" value="F:phosphatidylinositol binding"/>
    <property type="evidence" value="ECO:0007669"/>
    <property type="project" value="InterPro"/>
</dbReference>
<dbReference type="GO" id="GO:0043130">
    <property type="term" value="F:ubiquitin binding"/>
    <property type="evidence" value="ECO:0007669"/>
    <property type="project" value="InterPro"/>
</dbReference>
<dbReference type="GO" id="GO:0043328">
    <property type="term" value="P:protein transport to vacuole involved in ubiquitin-dependent protein catabolic process via the multivesicular body sorting pathway"/>
    <property type="evidence" value="ECO:0000318"/>
    <property type="project" value="GO_Central"/>
</dbReference>
<dbReference type="CDD" id="cd21386">
    <property type="entry name" value="GAT_Hse1"/>
    <property type="match status" value="1"/>
</dbReference>
<dbReference type="CDD" id="cd11805">
    <property type="entry name" value="SH3_GRB2_like_C"/>
    <property type="match status" value="1"/>
</dbReference>
<dbReference type="CDD" id="cd16978">
    <property type="entry name" value="VHS_HSE1"/>
    <property type="match status" value="1"/>
</dbReference>
<dbReference type="Gene3D" id="1.20.5.1940">
    <property type="match status" value="1"/>
</dbReference>
<dbReference type="Gene3D" id="1.25.40.90">
    <property type="match status" value="1"/>
</dbReference>
<dbReference type="Gene3D" id="2.30.30.40">
    <property type="entry name" value="SH3 Domains"/>
    <property type="match status" value="1"/>
</dbReference>
<dbReference type="InterPro" id="IPR008942">
    <property type="entry name" value="ENTH_VHS"/>
</dbReference>
<dbReference type="InterPro" id="IPR004152">
    <property type="entry name" value="GAT_dom"/>
</dbReference>
<dbReference type="InterPro" id="IPR036028">
    <property type="entry name" value="SH3-like_dom_sf"/>
</dbReference>
<dbReference type="InterPro" id="IPR001452">
    <property type="entry name" value="SH3_domain"/>
</dbReference>
<dbReference type="InterPro" id="IPR050670">
    <property type="entry name" value="STAM"/>
</dbReference>
<dbReference type="InterPro" id="IPR002014">
    <property type="entry name" value="VHS_dom"/>
</dbReference>
<dbReference type="PANTHER" id="PTHR45929">
    <property type="entry name" value="JAK PATHWAY SIGNAL TRANSDUCTION ADAPTOR MOLECULE"/>
    <property type="match status" value="1"/>
</dbReference>
<dbReference type="PANTHER" id="PTHR45929:SF3">
    <property type="entry name" value="JAK PATHWAY SIGNAL TRANSDUCTION ADAPTOR MOLECULE"/>
    <property type="match status" value="1"/>
</dbReference>
<dbReference type="Pfam" id="PF03127">
    <property type="entry name" value="GAT"/>
    <property type="match status" value="1"/>
</dbReference>
<dbReference type="Pfam" id="PF00018">
    <property type="entry name" value="SH3_1"/>
    <property type="match status" value="1"/>
</dbReference>
<dbReference type="Pfam" id="PF00790">
    <property type="entry name" value="VHS"/>
    <property type="match status" value="1"/>
</dbReference>
<dbReference type="PRINTS" id="PR00499">
    <property type="entry name" value="P67PHOX"/>
</dbReference>
<dbReference type="PRINTS" id="PR00452">
    <property type="entry name" value="SH3DOMAIN"/>
</dbReference>
<dbReference type="SMART" id="SM00326">
    <property type="entry name" value="SH3"/>
    <property type="match status" value="1"/>
</dbReference>
<dbReference type="SMART" id="SM00288">
    <property type="entry name" value="VHS"/>
    <property type="match status" value="1"/>
</dbReference>
<dbReference type="SUPFAM" id="SSF48464">
    <property type="entry name" value="ENTH/VHS domain"/>
    <property type="match status" value="1"/>
</dbReference>
<dbReference type="SUPFAM" id="SSF89009">
    <property type="entry name" value="GAT-like domain"/>
    <property type="match status" value="1"/>
</dbReference>
<dbReference type="SUPFAM" id="SSF50044">
    <property type="entry name" value="SH3-domain"/>
    <property type="match status" value="1"/>
</dbReference>
<dbReference type="PROSITE" id="PS50002">
    <property type="entry name" value="SH3"/>
    <property type="match status" value="1"/>
</dbReference>
<dbReference type="PROSITE" id="PS50179">
    <property type="entry name" value="VHS"/>
    <property type="match status" value="1"/>
</dbReference>
<accession>Q4P5J4</accession>
<accession>A0A0D1DYB7</accession>
<feature type="chain" id="PRO_0000292504" description="Class E vacuolar protein-sorting machinery protein HSE1">
    <location>
        <begin position="1"/>
        <end position="593"/>
    </location>
</feature>
<feature type="domain" description="VHS" evidence="3">
    <location>
        <begin position="15"/>
        <end position="144"/>
    </location>
</feature>
<feature type="domain" description="UIM" evidence="5">
    <location>
        <begin position="162"/>
        <end position="181"/>
    </location>
</feature>
<feature type="domain" description="SH3" evidence="2">
    <location>
        <begin position="252"/>
        <end position="311"/>
    </location>
</feature>
<feature type="region of interest" description="Disordered" evidence="4">
    <location>
        <begin position="136"/>
        <end position="251"/>
    </location>
</feature>
<feature type="region of interest" description="Disordered" evidence="4">
    <location>
        <begin position="474"/>
        <end position="593"/>
    </location>
</feature>
<feature type="compositionally biased region" description="Basic and acidic residues" evidence="4">
    <location>
        <begin position="151"/>
        <end position="171"/>
    </location>
</feature>
<feature type="compositionally biased region" description="Polar residues" evidence="4">
    <location>
        <begin position="175"/>
        <end position="193"/>
    </location>
</feature>
<feature type="compositionally biased region" description="Low complexity" evidence="4">
    <location>
        <begin position="194"/>
        <end position="227"/>
    </location>
</feature>
<feature type="compositionally biased region" description="Polar residues" evidence="4">
    <location>
        <begin position="232"/>
        <end position="241"/>
    </location>
</feature>
<feature type="compositionally biased region" description="Polar residues" evidence="4">
    <location>
        <begin position="504"/>
        <end position="521"/>
    </location>
</feature>
<feature type="compositionally biased region" description="Basic and acidic residues" evidence="4">
    <location>
        <begin position="523"/>
        <end position="539"/>
    </location>
</feature>
<feature type="compositionally biased region" description="Low complexity" evidence="4">
    <location>
        <begin position="540"/>
        <end position="552"/>
    </location>
</feature>
<feature type="compositionally biased region" description="Polar residues" evidence="4">
    <location>
        <begin position="566"/>
        <end position="593"/>
    </location>
</feature>
<keyword id="KW-0967">Endosome</keyword>
<keyword id="KW-0472">Membrane</keyword>
<keyword id="KW-0653">Protein transport</keyword>
<keyword id="KW-1185">Reference proteome</keyword>
<keyword id="KW-0728">SH3 domain</keyword>
<keyword id="KW-0813">Transport</keyword>
<protein>
    <recommendedName>
        <fullName>Class E vacuolar protein-sorting machinery protein HSE1</fullName>
    </recommendedName>
</protein>
<gene>
    <name type="primary">HSE1</name>
    <name type="ORF">UMAG_04619</name>
</gene>
<name>HSE1_MYCMD</name>
<organism>
    <name type="scientific">Mycosarcoma maydis</name>
    <name type="common">Corn smut fungus</name>
    <name type="synonym">Ustilago maydis</name>
    <dbReference type="NCBI Taxonomy" id="5270"/>
    <lineage>
        <taxon>Eukaryota</taxon>
        <taxon>Fungi</taxon>
        <taxon>Dikarya</taxon>
        <taxon>Basidiomycota</taxon>
        <taxon>Ustilaginomycotina</taxon>
        <taxon>Ustilaginomycetes</taxon>
        <taxon>Ustilaginales</taxon>
        <taxon>Ustilaginaceae</taxon>
        <taxon>Mycosarcoma</taxon>
    </lineage>
</organism>
<reference key="1">
    <citation type="journal article" date="2006" name="Nature">
        <title>Insights from the genome of the biotrophic fungal plant pathogen Ustilago maydis.</title>
        <authorList>
            <person name="Kaemper J."/>
            <person name="Kahmann R."/>
            <person name="Boelker M."/>
            <person name="Ma L.-J."/>
            <person name="Brefort T."/>
            <person name="Saville B.J."/>
            <person name="Banuett F."/>
            <person name="Kronstad J.W."/>
            <person name="Gold S.E."/>
            <person name="Mueller O."/>
            <person name="Perlin M.H."/>
            <person name="Woesten H.A.B."/>
            <person name="de Vries R."/>
            <person name="Ruiz-Herrera J."/>
            <person name="Reynaga-Pena C.G."/>
            <person name="Snetselaar K."/>
            <person name="McCann M."/>
            <person name="Perez-Martin J."/>
            <person name="Feldbruegge M."/>
            <person name="Basse C.W."/>
            <person name="Steinberg G."/>
            <person name="Ibeas J.I."/>
            <person name="Holloman W."/>
            <person name="Guzman P."/>
            <person name="Farman M.L."/>
            <person name="Stajich J.E."/>
            <person name="Sentandreu R."/>
            <person name="Gonzalez-Prieto J.M."/>
            <person name="Kennell J.C."/>
            <person name="Molina L."/>
            <person name="Schirawski J."/>
            <person name="Mendoza-Mendoza A."/>
            <person name="Greilinger D."/>
            <person name="Muench K."/>
            <person name="Roessel N."/>
            <person name="Scherer M."/>
            <person name="Vranes M."/>
            <person name="Ladendorf O."/>
            <person name="Vincon V."/>
            <person name="Fuchs U."/>
            <person name="Sandrock B."/>
            <person name="Meng S."/>
            <person name="Ho E.C.H."/>
            <person name="Cahill M.J."/>
            <person name="Boyce K.J."/>
            <person name="Klose J."/>
            <person name="Klosterman S.J."/>
            <person name="Deelstra H.J."/>
            <person name="Ortiz-Castellanos L."/>
            <person name="Li W."/>
            <person name="Sanchez-Alonso P."/>
            <person name="Schreier P.H."/>
            <person name="Haeuser-Hahn I."/>
            <person name="Vaupel M."/>
            <person name="Koopmann E."/>
            <person name="Friedrich G."/>
            <person name="Voss H."/>
            <person name="Schlueter T."/>
            <person name="Margolis J."/>
            <person name="Platt D."/>
            <person name="Swimmer C."/>
            <person name="Gnirke A."/>
            <person name="Chen F."/>
            <person name="Vysotskaia V."/>
            <person name="Mannhaupt G."/>
            <person name="Gueldener U."/>
            <person name="Muensterkoetter M."/>
            <person name="Haase D."/>
            <person name="Oesterheld M."/>
            <person name="Mewes H.-W."/>
            <person name="Mauceli E.W."/>
            <person name="DeCaprio D."/>
            <person name="Wade C.M."/>
            <person name="Butler J."/>
            <person name="Young S.K."/>
            <person name="Jaffe D.B."/>
            <person name="Calvo S.E."/>
            <person name="Nusbaum C."/>
            <person name="Galagan J.E."/>
            <person name="Birren B.W."/>
        </authorList>
    </citation>
    <scope>NUCLEOTIDE SEQUENCE [LARGE SCALE GENOMIC DNA]</scope>
    <source>
        <strain>DSM 14603 / FGSC 9021 / UM521</strain>
    </source>
</reference>
<reference key="2">
    <citation type="submission" date="2014-09" db="EMBL/GenBank/DDBJ databases">
        <authorList>
            <person name="Gueldener U."/>
            <person name="Muensterkoetter M."/>
            <person name="Walter M.C."/>
            <person name="Mannhaupt G."/>
            <person name="Kahmann R."/>
        </authorList>
    </citation>
    <scope>GENOME REANNOTATION</scope>
    <source>
        <strain>DSM 14603 / FGSC 9021 / UM521</strain>
    </source>
</reference>